<keyword id="KW-0021">Allosteric enzyme</keyword>
<keyword id="KW-0067">ATP-binding</keyword>
<keyword id="KW-0319">Glycerol metabolism</keyword>
<keyword id="KW-0418">Kinase</keyword>
<keyword id="KW-0479">Metal-binding</keyword>
<keyword id="KW-0547">Nucleotide-binding</keyword>
<keyword id="KW-0808">Transferase</keyword>
<keyword id="KW-0862">Zinc</keyword>
<reference key="1">
    <citation type="journal article" date="2011" name="J. Bacteriol.">
        <title>Comparative genomics of 28 Salmonella enterica isolates: evidence for CRISPR-mediated adaptive sublineage evolution.</title>
        <authorList>
            <person name="Fricke W.F."/>
            <person name="Mammel M.K."/>
            <person name="McDermott P.F."/>
            <person name="Tartera C."/>
            <person name="White D.G."/>
            <person name="Leclerc J.E."/>
            <person name="Ravel J."/>
            <person name="Cebula T.A."/>
        </authorList>
    </citation>
    <scope>NUCLEOTIDE SEQUENCE [LARGE SCALE GENOMIC DNA]</scope>
    <source>
        <strain>SL476</strain>
    </source>
</reference>
<accession>B4TCM2</accession>
<proteinExistence type="inferred from homology"/>
<feature type="chain" id="PRO_1000098758" description="Glycerol kinase">
    <location>
        <begin position="1"/>
        <end position="502"/>
    </location>
</feature>
<feature type="binding site" evidence="1">
    <location>
        <position position="14"/>
    </location>
    <ligand>
        <name>ADP</name>
        <dbReference type="ChEBI" id="CHEBI:456216"/>
    </ligand>
</feature>
<feature type="binding site" evidence="1">
    <location>
        <position position="14"/>
    </location>
    <ligand>
        <name>ATP</name>
        <dbReference type="ChEBI" id="CHEBI:30616"/>
    </ligand>
</feature>
<feature type="binding site" evidence="1">
    <location>
        <position position="14"/>
    </location>
    <ligand>
        <name>sn-glycerol 3-phosphate</name>
        <dbReference type="ChEBI" id="CHEBI:57597"/>
    </ligand>
</feature>
<feature type="binding site" evidence="1">
    <location>
        <position position="15"/>
    </location>
    <ligand>
        <name>ATP</name>
        <dbReference type="ChEBI" id="CHEBI:30616"/>
    </ligand>
</feature>
<feature type="binding site" evidence="1">
    <location>
        <position position="16"/>
    </location>
    <ligand>
        <name>ATP</name>
        <dbReference type="ChEBI" id="CHEBI:30616"/>
    </ligand>
</feature>
<feature type="binding site" evidence="1">
    <location>
        <position position="18"/>
    </location>
    <ligand>
        <name>ADP</name>
        <dbReference type="ChEBI" id="CHEBI:456216"/>
    </ligand>
</feature>
<feature type="binding site" evidence="1">
    <location>
        <position position="84"/>
    </location>
    <ligand>
        <name>glycerol</name>
        <dbReference type="ChEBI" id="CHEBI:17754"/>
    </ligand>
</feature>
<feature type="binding site" evidence="1">
    <location>
        <position position="84"/>
    </location>
    <ligand>
        <name>sn-glycerol 3-phosphate</name>
        <dbReference type="ChEBI" id="CHEBI:57597"/>
    </ligand>
</feature>
<feature type="binding site" evidence="1">
    <location>
        <position position="85"/>
    </location>
    <ligand>
        <name>glycerol</name>
        <dbReference type="ChEBI" id="CHEBI:17754"/>
    </ligand>
</feature>
<feature type="binding site" evidence="1">
    <location>
        <position position="85"/>
    </location>
    <ligand>
        <name>sn-glycerol 3-phosphate</name>
        <dbReference type="ChEBI" id="CHEBI:57597"/>
    </ligand>
</feature>
<feature type="binding site" evidence="1">
    <location>
        <position position="136"/>
    </location>
    <ligand>
        <name>glycerol</name>
        <dbReference type="ChEBI" id="CHEBI:17754"/>
    </ligand>
</feature>
<feature type="binding site" evidence="1">
    <location>
        <position position="136"/>
    </location>
    <ligand>
        <name>sn-glycerol 3-phosphate</name>
        <dbReference type="ChEBI" id="CHEBI:57597"/>
    </ligand>
</feature>
<feature type="binding site" evidence="1">
    <location>
        <position position="246"/>
    </location>
    <ligand>
        <name>glycerol</name>
        <dbReference type="ChEBI" id="CHEBI:17754"/>
    </ligand>
</feature>
<feature type="binding site" evidence="1">
    <location>
        <position position="246"/>
    </location>
    <ligand>
        <name>sn-glycerol 3-phosphate</name>
        <dbReference type="ChEBI" id="CHEBI:57597"/>
    </ligand>
</feature>
<feature type="binding site" evidence="1">
    <location>
        <position position="247"/>
    </location>
    <ligand>
        <name>glycerol</name>
        <dbReference type="ChEBI" id="CHEBI:17754"/>
    </ligand>
</feature>
<feature type="binding site" evidence="1">
    <location>
        <position position="268"/>
    </location>
    <ligand>
        <name>ADP</name>
        <dbReference type="ChEBI" id="CHEBI:456216"/>
    </ligand>
</feature>
<feature type="binding site" evidence="1">
    <location>
        <position position="268"/>
    </location>
    <ligand>
        <name>ATP</name>
        <dbReference type="ChEBI" id="CHEBI:30616"/>
    </ligand>
</feature>
<feature type="binding site" evidence="1">
    <location>
        <position position="311"/>
    </location>
    <ligand>
        <name>ADP</name>
        <dbReference type="ChEBI" id="CHEBI:456216"/>
    </ligand>
</feature>
<feature type="binding site" evidence="1">
    <location>
        <position position="311"/>
    </location>
    <ligand>
        <name>ATP</name>
        <dbReference type="ChEBI" id="CHEBI:30616"/>
    </ligand>
</feature>
<feature type="binding site" evidence="1">
    <location>
        <position position="315"/>
    </location>
    <ligand>
        <name>ATP</name>
        <dbReference type="ChEBI" id="CHEBI:30616"/>
    </ligand>
</feature>
<feature type="binding site" evidence="1">
    <location>
        <position position="412"/>
    </location>
    <ligand>
        <name>ADP</name>
        <dbReference type="ChEBI" id="CHEBI:456216"/>
    </ligand>
</feature>
<feature type="binding site" evidence="1">
    <location>
        <position position="412"/>
    </location>
    <ligand>
        <name>ATP</name>
        <dbReference type="ChEBI" id="CHEBI:30616"/>
    </ligand>
</feature>
<feature type="binding site" evidence="1">
    <location>
        <position position="416"/>
    </location>
    <ligand>
        <name>ADP</name>
        <dbReference type="ChEBI" id="CHEBI:456216"/>
    </ligand>
</feature>
<evidence type="ECO:0000255" key="1">
    <source>
        <dbReference type="HAMAP-Rule" id="MF_00186"/>
    </source>
</evidence>
<name>GLPK_SALHS</name>
<gene>
    <name evidence="1" type="primary">glpK</name>
    <name type="ordered locus">SeHA_C4417</name>
</gene>
<organism>
    <name type="scientific">Salmonella heidelberg (strain SL476)</name>
    <dbReference type="NCBI Taxonomy" id="454169"/>
    <lineage>
        <taxon>Bacteria</taxon>
        <taxon>Pseudomonadati</taxon>
        <taxon>Pseudomonadota</taxon>
        <taxon>Gammaproteobacteria</taxon>
        <taxon>Enterobacterales</taxon>
        <taxon>Enterobacteriaceae</taxon>
        <taxon>Salmonella</taxon>
    </lineage>
</organism>
<dbReference type="EC" id="2.7.1.30" evidence="1"/>
<dbReference type="EMBL" id="CP001120">
    <property type="protein sequence ID" value="ACF69768.1"/>
    <property type="molecule type" value="Genomic_DNA"/>
</dbReference>
<dbReference type="RefSeq" id="WP_000136809.1">
    <property type="nucleotide sequence ID" value="NC_011083.1"/>
</dbReference>
<dbReference type="SMR" id="B4TCM2"/>
<dbReference type="KEGG" id="seh:SeHA_C4417"/>
<dbReference type="HOGENOM" id="CLU_009281_2_3_6"/>
<dbReference type="UniPathway" id="UPA00618">
    <property type="reaction ID" value="UER00672"/>
</dbReference>
<dbReference type="Proteomes" id="UP000001866">
    <property type="component" value="Chromosome"/>
</dbReference>
<dbReference type="GO" id="GO:0005829">
    <property type="term" value="C:cytosol"/>
    <property type="evidence" value="ECO:0007669"/>
    <property type="project" value="TreeGrafter"/>
</dbReference>
<dbReference type="GO" id="GO:0005524">
    <property type="term" value="F:ATP binding"/>
    <property type="evidence" value="ECO:0007669"/>
    <property type="project" value="UniProtKB-UniRule"/>
</dbReference>
<dbReference type="GO" id="GO:0004370">
    <property type="term" value="F:glycerol kinase activity"/>
    <property type="evidence" value="ECO:0000250"/>
    <property type="project" value="UniProtKB"/>
</dbReference>
<dbReference type="GO" id="GO:0046872">
    <property type="term" value="F:metal ion binding"/>
    <property type="evidence" value="ECO:0007669"/>
    <property type="project" value="UniProtKB-KW"/>
</dbReference>
<dbReference type="GO" id="GO:0019563">
    <property type="term" value="P:glycerol catabolic process"/>
    <property type="evidence" value="ECO:0007669"/>
    <property type="project" value="UniProtKB-UniRule"/>
</dbReference>
<dbReference type="GO" id="GO:0006071">
    <property type="term" value="P:glycerol metabolic process"/>
    <property type="evidence" value="ECO:0000250"/>
    <property type="project" value="UniProtKB"/>
</dbReference>
<dbReference type="GO" id="GO:0006072">
    <property type="term" value="P:glycerol-3-phosphate metabolic process"/>
    <property type="evidence" value="ECO:0007669"/>
    <property type="project" value="InterPro"/>
</dbReference>
<dbReference type="CDD" id="cd07786">
    <property type="entry name" value="FGGY_EcGK_like"/>
    <property type="match status" value="1"/>
</dbReference>
<dbReference type="FunFam" id="3.30.420.40:FF:000007">
    <property type="entry name" value="Glycerol kinase"/>
    <property type="match status" value="1"/>
</dbReference>
<dbReference type="FunFam" id="3.30.420.40:FF:000008">
    <property type="entry name" value="Glycerol kinase"/>
    <property type="match status" value="1"/>
</dbReference>
<dbReference type="Gene3D" id="3.30.420.40">
    <property type="match status" value="2"/>
</dbReference>
<dbReference type="HAMAP" id="MF_00186">
    <property type="entry name" value="Glycerol_kin"/>
    <property type="match status" value="1"/>
</dbReference>
<dbReference type="InterPro" id="IPR043129">
    <property type="entry name" value="ATPase_NBD"/>
</dbReference>
<dbReference type="InterPro" id="IPR000577">
    <property type="entry name" value="Carb_kinase_FGGY"/>
</dbReference>
<dbReference type="InterPro" id="IPR018483">
    <property type="entry name" value="Carb_kinase_FGGY_CS"/>
</dbReference>
<dbReference type="InterPro" id="IPR018485">
    <property type="entry name" value="FGGY_C"/>
</dbReference>
<dbReference type="InterPro" id="IPR018484">
    <property type="entry name" value="FGGY_N"/>
</dbReference>
<dbReference type="InterPro" id="IPR005999">
    <property type="entry name" value="Glycerol_kin"/>
</dbReference>
<dbReference type="NCBIfam" id="TIGR01311">
    <property type="entry name" value="glycerol_kin"/>
    <property type="match status" value="1"/>
</dbReference>
<dbReference type="NCBIfam" id="NF000756">
    <property type="entry name" value="PRK00047.1"/>
    <property type="match status" value="1"/>
</dbReference>
<dbReference type="PANTHER" id="PTHR10196:SF69">
    <property type="entry name" value="GLYCEROL KINASE"/>
    <property type="match status" value="1"/>
</dbReference>
<dbReference type="PANTHER" id="PTHR10196">
    <property type="entry name" value="SUGAR KINASE"/>
    <property type="match status" value="1"/>
</dbReference>
<dbReference type="Pfam" id="PF02782">
    <property type="entry name" value="FGGY_C"/>
    <property type="match status" value="1"/>
</dbReference>
<dbReference type="Pfam" id="PF00370">
    <property type="entry name" value="FGGY_N"/>
    <property type="match status" value="1"/>
</dbReference>
<dbReference type="PIRSF" id="PIRSF000538">
    <property type="entry name" value="GlpK"/>
    <property type="match status" value="1"/>
</dbReference>
<dbReference type="SUPFAM" id="SSF53067">
    <property type="entry name" value="Actin-like ATPase domain"/>
    <property type="match status" value="2"/>
</dbReference>
<dbReference type="PROSITE" id="PS00933">
    <property type="entry name" value="FGGY_KINASES_1"/>
    <property type="match status" value="1"/>
</dbReference>
<dbReference type="PROSITE" id="PS00445">
    <property type="entry name" value="FGGY_KINASES_2"/>
    <property type="match status" value="1"/>
</dbReference>
<comment type="function">
    <text evidence="1">Key enzyme in the regulation of glycerol uptake and metabolism. Catalyzes the phosphorylation of glycerol to yield sn-glycerol 3-phosphate.</text>
</comment>
<comment type="catalytic activity">
    <reaction evidence="1">
        <text>glycerol + ATP = sn-glycerol 3-phosphate + ADP + H(+)</text>
        <dbReference type="Rhea" id="RHEA:21644"/>
        <dbReference type="ChEBI" id="CHEBI:15378"/>
        <dbReference type="ChEBI" id="CHEBI:17754"/>
        <dbReference type="ChEBI" id="CHEBI:30616"/>
        <dbReference type="ChEBI" id="CHEBI:57597"/>
        <dbReference type="ChEBI" id="CHEBI:456216"/>
        <dbReference type="EC" id="2.7.1.30"/>
    </reaction>
</comment>
<comment type="activity regulation">
    <text evidence="1">Activity of this regulatory enzyme is affected by several metabolites. Allosterically and non-competitively inhibited by fructose 1,6-bisphosphate (FBP) and unphosphorylated phosphocarrier protein EIIA-Glc (III-Glc), an integral component of the bacterial phosphotransferase (PTS) system.</text>
</comment>
<comment type="pathway">
    <text evidence="1">Polyol metabolism; glycerol degradation via glycerol kinase pathway; sn-glycerol 3-phosphate from glycerol: step 1/1.</text>
</comment>
<comment type="subunit">
    <text evidence="1">Homotetramer and homodimer (in equilibrium). Heterodimer with EIIA-Glc. Binds 1 zinc ion per glycerol kinase EIIA-Glc dimer. The zinc ion is important for dimerization.</text>
</comment>
<comment type="similarity">
    <text evidence="1">Belongs to the FGGY kinase family.</text>
</comment>
<protein>
    <recommendedName>
        <fullName evidence="1">Glycerol kinase</fullName>
        <ecNumber evidence="1">2.7.1.30</ecNumber>
    </recommendedName>
    <alternativeName>
        <fullName evidence="1">ATP:glycerol 3-phosphotransferase</fullName>
    </alternativeName>
    <alternativeName>
        <fullName evidence="1">Glycerokinase</fullName>
        <shortName evidence="1">GK</shortName>
    </alternativeName>
</protein>
<sequence length="502" mass="56052">MTEKKYIVALDQGTTSSRAVVMDHDANIVSVSQREFEQIYPKPGWVEHDPMEIWASQSSTLVEVLAKADISSDQIAAIGITNQRETAIVWERETGKPIYNAIVWQCRRTADICEQLKRDGLEDYIRDNTGLVVDPYFSGTKVKWILDHVEGSRERAKRGELLFGTVDTWLIWKMTQGRVHVTDYTNASRTMLFNIHDLDWDDKMLDVLDIPRAMLPQVRKSSEVYGQTNIGGKGGTRIPIAGIAGDQQAALFGQLCVKEGMAKNTYGTGCFMLMNTGEKAVKSENGLLTTIACGPSGEVNYALEGAVFMAGASIQWLRDEMKLISDAFDSEYFATKVKDTNGVYVVPAFTGLGAPYWDPYARGAIFGLTRGVNSNHIIRATLESIAYQTRDVLEAMQADSGIRLHALRVDGGAVANNFLMQFQSDILGTRVERPEVREVTALGAAYLAGLAVGYWQNLDELQEKAVIEREFRPGIETTERNYRYSGWKKAVKRAMAWEEHDK</sequence>